<evidence type="ECO:0000255" key="1"/>
<evidence type="ECO:0000305" key="2"/>
<name>MFS6L_DANRE</name>
<reference key="1">
    <citation type="submission" date="2004-07" db="EMBL/GenBank/DDBJ databases">
        <authorList>
            <consortium name="NIH - Zebrafish Gene Collection (ZGC) project"/>
        </authorList>
    </citation>
    <scope>NUCLEOTIDE SEQUENCE [LARGE SCALE MRNA]</scope>
    <source>
        <tissue>Embryo</tissue>
    </source>
</reference>
<comment type="subcellular location">
    <subcellularLocation>
        <location evidence="2">Membrane</location>
        <topology evidence="2">Multi-pass membrane protein</topology>
    </subcellularLocation>
</comment>
<comment type="similarity">
    <text evidence="2">Belongs to the major facilitator superfamily. MFSD6 family.</text>
</comment>
<proteinExistence type="evidence at transcript level"/>
<feature type="chain" id="PRO_0000321946" description="Major facilitator superfamily domain-containing protein 6-like">
    <location>
        <begin position="1"/>
        <end position="542"/>
    </location>
</feature>
<feature type="transmembrane region" description="Helical" evidence="1">
    <location>
        <begin position="46"/>
        <end position="66"/>
    </location>
</feature>
<feature type="transmembrane region" description="Helical" evidence="1">
    <location>
        <begin position="89"/>
        <end position="109"/>
    </location>
</feature>
<feature type="transmembrane region" description="Helical" evidence="1">
    <location>
        <begin position="198"/>
        <end position="218"/>
    </location>
</feature>
<feature type="transmembrane region" description="Helical" evidence="1">
    <location>
        <begin position="246"/>
        <end position="266"/>
    </location>
</feature>
<feature type="transmembrane region" description="Helical" evidence="1">
    <location>
        <begin position="272"/>
        <end position="292"/>
    </location>
</feature>
<feature type="transmembrane region" description="Helical" evidence="1">
    <location>
        <begin position="321"/>
        <end position="341"/>
    </location>
</feature>
<feature type="transmembrane region" description="Helical" evidence="1">
    <location>
        <begin position="352"/>
        <end position="372"/>
    </location>
</feature>
<feature type="transmembrane region" description="Helical" evidence="1">
    <location>
        <begin position="381"/>
        <end position="401"/>
    </location>
</feature>
<feature type="transmembrane region" description="Helical" evidence="1">
    <location>
        <begin position="404"/>
        <end position="424"/>
    </location>
</feature>
<feature type="transmembrane region" description="Helical" evidence="1">
    <location>
        <begin position="444"/>
        <end position="464"/>
    </location>
</feature>
<feature type="transmembrane region" description="Helical" evidence="1">
    <location>
        <begin position="469"/>
        <end position="489"/>
    </location>
</feature>
<organism>
    <name type="scientific">Danio rerio</name>
    <name type="common">Zebrafish</name>
    <name type="synonym">Brachydanio rerio</name>
    <dbReference type="NCBI Taxonomy" id="7955"/>
    <lineage>
        <taxon>Eukaryota</taxon>
        <taxon>Metazoa</taxon>
        <taxon>Chordata</taxon>
        <taxon>Craniata</taxon>
        <taxon>Vertebrata</taxon>
        <taxon>Euteleostomi</taxon>
        <taxon>Actinopterygii</taxon>
        <taxon>Neopterygii</taxon>
        <taxon>Teleostei</taxon>
        <taxon>Ostariophysi</taxon>
        <taxon>Cypriniformes</taxon>
        <taxon>Danionidae</taxon>
        <taxon>Danioninae</taxon>
        <taxon>Danio</taxon>
    </lineage>
</organism>
<keyword id="KW-0472">Membrane</keyword>
<keyword id="KW-1185">Reference proteome</keyword>
<keyword id="KW-0812">Transmembrane</keyword>
<keyword id="KW-1133">Transmembrane helix</keyword>
<protein>
    <recommendedName>
        <fullName>Major facilitator superfamily domain-containing protein 6-like</fullName>
    </recommendedName>
</protein>
<gene>
    <name type="primary">mfsd6l</name>
    <name type="ORF">zgc:101042</name>
</gene>
<sequence>MKKGAMQKSKQWNVKGAVRLASVFHFLHSCGSGCLLPFLTLYFRHLGLSAAMIGIIMASKHLLALLWRPFSSVLARQYDKRRTVIVGSLLSSALVVLPLLLFPSAGILVESGRCNTSQPDADPTLPLAVIEQMTVPVGSNATVYSVNQTSVSTNQTLEDNTLVNHSRSARGLRSLKKEEEPHSEFLGSLKVMDAQHQMFFLVLLVTALWEFVAVPLEWTADDGLYEYLDFVDATDRHSGVKVWKHVGAAFGSCLVGVLVTNLFCRIGNSVEFYSYTVLMILTVPASALLPIYLRKRERPTSGGFKALQLVHGNPQAILCAVTVILTGMVTSAVSDFLLWLMQDCGAMEIHMGICLALAHLSHTGFSPIAGPLSRFLKYHGWMLVLAVVGLAMQCLYYSFLWSPWAVMPAQLLAGFSTGALWWSVTSQSEDIATPGTEKTILRLFEAFSLDMGAALGSLIAGFVVQKFGVNVLFQGASVMLAVWSSALAVLKWKIPRQRRINYSRLLAADTEVSESESDQEKDWLETAMEDDRRNNKWTVNKS</sequence>
<dbReference type="EMBL" id="BC078328">
    <property type="protein sequence ID" value="AAH78328.1"/>
    <property type="molecule type" value="mRNA"/>
</dbReference>
<dbReference type="RefSeq" id="NP_001003586.1">
    <property type="nucleotide sequence ID" value="NM_001003586.2"/>
</dbReference>
<dbReference type="FunCoup" id="Q6DBX0">
    <property type="interactions" value="458"/>
</dbReference>
<dbReference type="STRING" id="7955.ENSDARP00000010172"/>
<dbReference type="PaxDb" id="7955-ENSDARP00000010172"/>
<dbReference type="Ensembl" id="ENSDART00000007119">
    <property type="protein sequence ID" value="ENSDARP00000010172"/>
    <property type="gene ID" value="ENSDARG00000014761"/>
</dbReference>
<dbReference type="GeneID" id="445192"/>
<dbReference type="KEGG" id="dre:445192"/>
<dbReference type="AGR" id="ZFIN:ZDB-GENE-040801-105"/>
<dbReference type="CTD" id="162387"/>
<dbReference type="ZFIN" id="ZDB-GENE-040801-105">
    <property type="gene designation" value="mfsd6l"/>
</dbReference>
<dbReference type="eggNOG" id="KOG3762">
    <property type="taxonomic scope" value="Eukaryota"/>
</dbReference>
<dbReference type="HOGENOM" id="CLU_013133_4_0_1"/>
<dbReference type="InParanoid" id="Q6DBX0"/>
<dbReference type="OMA" id="EGLQWTF"/>
<dbReference type="OrthoDB" id="515887at2759"/>
<dbReference type="PhylomeDB" id="Q6DBX0"/>
<dbReference type="TreeFam" id="TF314366"/>
<dbReference type="PRO" id="PR:Q6DBX0"/>
<dbReference type="Proteomes" id="UP000000437">
    <property type="component" value="Chromosome 3"/>
</dbReference>
<dbReference type="Bgee" id="ENSDARG00000014761">
    <property type="expression patterns" value="Expressed in tail and 18 other cell types or tissues"/>
</dbReference>
<dbReference type="GO" id="GO:0016020">
    <property type="term" value="C:membrane"/>
    <property type="evidence" value="ECO:0000318"/>
    <property type="project" value="GO_Central"/>
</dbReference>
<dbReference type="CDD" id="cd17479">
    <property type="entry name" value="MFS_MFSD6L"/>
    <property type="match status" value="1"/>
</dbReference>
<dbReference type="Gene3D" id="1.20.1250.20">
    <property type="entry name" value="MFS general substrate transporter like domains"/>
    <property type="match status" value="2"/>
</dbReference>
<dbReference type="InterPro" id="IPR024989">
    <property type="entry name" value="MFS_assoc_dom"/>
</dbReference>
<dbReference type="InterPro" id="IPR051717">
    <property type="entry name" value="MFS_MFSD6"/>
</dbReference>
<dbReference type="InterPro" id="IPR036259">
    <property type="entry name" value="MFS_trans_sf"/>
</dbReference>
<dbReference type="PANTHER" id="PTHR16172">
    <property type="entry name" value="MAJOR FACILITATOR SUPERFAMILY DOMAIN-CONTAINING PROTEIN 6-LIKE"/>
    <property type="match status" value="1"/>
</dbReference>
<dbReference type="PANTHER" id="PTHR16172:SF41">
    <property type="entry name" value="MAJOR FACILITATOR SUPERFAMILY DOMAIN-CONTAINING PROTEIN 6-LIKE"/>
    <property type="match status" value="1"/>
</dbReference>
<dbReference type="Pfam" id="PF12832">
    <property type="entry name" value="MFS_1_like"/>
    <property type="match status" value="1"/>
</dbReference>
<dbReference type="SUPFAM" id="SSF103473">
    <property type="entry name" value="MFS general substrate transporter"/>
    <property type="match status" value="2"/>
</dbReference>
<accession>Q6DBX0</accession>